<comment type="function">
    <text>Protamines substitute for histones in the chromatin of sperm during the haploid phase of spermatogenesis. They compact sperm DNA into a highly condensed, stable and inactive complex.</text>
</comment>
<comment type="subcellular location">
    <subcellularLocation>
        <location>Nucleus</location>
    </subcellularLocation>
    <subcellularLocation>
        <location>Chromosome</location>
    </subcellularLocation>
</comment>
<comment type="tissue specificity">
    <text>Testis.</text>
</comment>
<comment type="similarity">
    <text evidence="4">Belongs to the protamine P1 family.</text>
</comment>
<organism>
    <name type="scientific">Coturnix japonica</name>
    <name type="common">Japanese quail</name>
    <name type="synonym">Coturnix coturnix japonica</name>
    <dbReference type="NCBI Taxonomy" id="93934"/>
    <lineage>
        <taxon>Eukaryota</taxon>
        <taxon>Metazoa</taxon>
        <taxon>Chordata</taxon>
        <taxon>Craniata</taxon>
        <taxon>Vertebrata</taxon>
        <taxon>Euteleostomi</taxon>
        <taxon>Archelosauria</taxon>
        <taxon>Archosauria</taxon>
        <taxon>Dinosauria</taxon>
        <taxon>Saurischia</taxon>
        <taxon>Theropoda</taxon>
        <taxon>Coelurosauria</taxon>
        <taxon>Aves</taxon>
        <taxon>Neognathae</taxon>
        <taxon>Galloanserae</taxon>
        <taxon>Galliformes</taxon>
        <taxon>Phasianidae</taxon>
        <taxon>Perdicinae</taxon>
        <taxon>Coturnix</taxon>
    </lineage>
</organism>
<accession>P14402</accession>
<name>HSP1_COTJA</name>
<dbReference type="EMBL" id="M30275">
    <property type="protein sequence ID" value="AAA49498.1"/>
    <property type="molecule type" value="mRNA"/>
</dbReference>
<dbReference type="PIR" id="A34356">
    <property type="entry name" value="A34356"/>
</dbReference>
<dbReference type="Proteomes" id="UP000694412">
    <property type="component" value="Unplaced"/>
</dbReference>
<dbReference type="GO" id="GO:0000786">
    <property type="term" value="C:nucleosome"/>
    <property type="evidence" value="ECO:0007669"/>
    <property type="project" value="UniProtKB-KW"/>
</dbReference>
<dbReference type="GO" id="GO:0005634">
    <property type="term" value="C:nucleus"/>
    <property type="evidence" value="ECO:0007669"/>
    <property type="project" value="UniProtKB-SubCell"/>
</dbReference>
<dbReference type="GO" id="GO:0003677">
    <property type="term" value="F:DNA binding"/>
    <property type="evidence" value="ECO:0007669"/>
    <property type="project" value="UniProtKB-KW"/>
</dbReference>
<dbReference type="GO" id="GO:0030261">
    <property type="term" value="P:chromosome condensation"/>
    <property type="evidence" value="ECO:0007669"/>
    <property type="project" value="UniProtKB-KW"/>
</dbReference>
<dbReference type="GO" id="GO:0035092">
    <property type="term" value="P:sperm DNA condensation"/>
    <property type="evidence" value="ECO:0007669"/>
    <property type="project" value="InterPro"/>
</dbReference>
<dbReference type="InterPro" id="IPR000221">
    <property type="entry name" value="Protamine_P1"/>
</dbReference>
<dbReference type="PROSITE" id="PS00048">
    <property type="entry name" value="PROTAMINE_P1"/>
    <property type="match status" value="1"/>
</dbReference>
<feature type="initiator methionine" description="Removed" evidence="1">
    <location>
        <position position="1"/>
    </location>
</feature>
<feature type="chain" id="PRO_0000191590" description="Sperm histone">
    <location>
        <begin position="2"/>
        <end position="57"/>
    </location>
</feature>
<feature type="region of interest" description="Disordered" evidence="3">
    <location>
        <begin position="1"/>
        <end position="57"/>
    </location>
</feature>
<feature type="modified residue" description="Phosphothreonine" evidence="2">
    <location>
        <position position="9"/>
    </location>
</feature>
<keyword id="KW-0158">Chromosome</keyword>
<keyword id="KW-0217">Developmental protein</keyword>
<keyword id="KW-0221">Differentiation</keyword>
<keyword id="KW-0226">DNA condensation</keyword>
<keyword id="KW-0238">DNA-binding</keyword>
<keyword id="KW-0544">Nucleosome core</keyword>
<keyword id="KW-0539">Nucleus</keyword>
<keyword id="KW-0597">Phosphoprotein</keyword>
<keyword id="KW-1185">Reference proteome</keyword>
<keyword id="KW-0744">Spermatogenesis</keyword>
<evidence type="ECO:0000250" key="1">
    <source>
        <dbReference type="UniProtKB" id="P15340"/>
    </source>
</evidence>
<evidence type="ECO:0000255" key="2"/>
<evidence type="ECO:0000256" key="3">
    <source>
        <dbReference type="SAM" id="MobiDB-lite"/>
    </source>
</evidence>
<evidence type="ECO:0000305" key="4"/>
<proteinExistence type="evidence at transcript level"/>
<sequence length="57" mass="7828">MARYRRTRTRSRSRRRRRSRRRRSSRRRRYGRSRRSYRSVGRRRRRYGRRRRRRRRY</sequence>
<protein>
    <recommendedName>
        <fullName>Sperm histone</fullName>
    </recommendedName>
    <alternativeName>
        <fullName>Protamine</fullName>
    </alternativeName>
</protein>
<reference key="1">
    <citation type="journal article" date="1989" name="J. Biol. Chem.">
        <title>Quail (Coturnix japonica) protamine, full-length cDNA sequence, and the function and evolution of vertebrate protamines.</title>
        <authorList>
            <person name="Oliva R."/>
            <person name="Goren R."/>
            <person name="Dixon G.H."/>
        </authorList>
    </citation>
    <scope>NUCLEOTIDE SEQUENCE [MRNA]</scope>
</reference>